<evidence type="ECO:0000255" key="1">
    <source>
        <dbReference type="HAMAP-Rule" id="MF_00445"/>
    </source>
</evidence>
<proteinExistence type="inferred from homology"/>
<dbReference type="EC" id="7.1.1.-" evidence="1"/>
<dbReference type="EMBL" id="BX936398">
    <property type="protein sequence ID" value="CAH21813.1"/>
    <property type="molecule type" value="Genomic_DNA"/>
</dbReference>
<dbReference type="RefSeq" id="WP_002210268.1">
    <property type="nucleotide sequence ID" value="NZ_CP009712.1"/>
</dbReference>
<dbReference type="SMR" id="Q669B2"/>
<dbReference type="GeneID" id="57976146"/>
<dbReference type="KEGG" id="ypo:BZ17_4063"/>
<dbReference type="KEGG" id="yps:YPTB2575"/>
<dbReference type="PATRIC" id="fig|273123.14.peg.4268"/>
<dbReference type="Proteomes" id="UP000001011">
    <property type="component" value="Chromosome"/>
</dbReference>
<dbReference type="GO" id="GO:0005886">
    <property type="term" value="C:plasma membrane"/>
    <property type="evidence" value="ECO:0007669"/>
    <property type="project" value="UniProtKB-SubCell"/>
</dbReference>
<dbReference type="GO" id="GO:0008137">
    <property type="term" value="F:NADH dehydrogenase (ubiquinone) activity"/>
    <property type="evidence" value="ECO:0007669"/>
    <property type="project" value="InterPro"/>
</dbReference>
<dbReference type="GO" id="GO:0050136">
    <property type="term" value="F:NADH:ubiquinone reductase (non-electrogenic) activity"/>
    <property type="evidence" value="ECO:0007669"/>
    <property type="project" value="UniProtKB-UniRule"/>
</dbReference>
<dbReference type="GO" id="GO:0048038">
    <property type="term" value="F:quinone binding"/>
    <property type="evidence" value="ECO:0007669"/>
    <property type="project" value="UniProtKB-KW"/>
</dbReference>
<dbReference type="GO" id="GO:0042773">
    <property type="term" value="P:ATP synthesis coupled electron transport"/>
    <property type="evidence" value="ECO:0007669"/>
    <property type="project" value="InterPro"/>
</dbReference>
<dbReference type="HAMAP" id="MF_00445">
    <property type="entry name" value="NDH1_NuoN_1"/>
    <property type="match status" value="1"/>
</dbReference>
<dbReference type="InterPro" id="IPR010096">
    <property type="entry name" value="NADH-Q_OxRdtase_suN/2"/>
</dbReference>
<dbReference type="InterPro" id="IPR001750">
    <property type="entry name" value="ND/Mrp_TM"/>
</dbReference>
<dbReference type="NCBIfam" id="TIGR01770">
    <property type="entry name" value="NDH_I_N"/>
    <property type="match status" value="1"/>
</dbReference>
<dbReference type="NCBIfam" id="NF004439">
    <property type="entry name" value="PRK05777.1-1"/>
    <property type="match status" value="1"/>
</dbReference>
<dbReference type="PANTHER" id="PTHR22773">
    <property type="entry name" value="NADH DEHYDROGENASE"/>
    <property type="match status" value="1"/>
</dbReference>
<dbReference type="Pfam" id="PF00361">
    <property type="entry name" value="Proton_antipo_M"/>
    <property type="match status" value="1"/>
</dbReference>
<accession>Q669B2</accession>
<reference key="1">
    <citation type="journal article" date="2004" name="Proc. Natl. Acad. Sci. U.S.A.">
        <title>Insights into the evolution of Yersinia pestis through whole-genome comparison with Yersinia pseudotuberculosis.</title>
        <authorList>
            <person name="Chain P.S.G."/>
            <person name="Carniel E."/>
            <person name="Larimer F.W."/>
            <person name="Lamerdin J."/>
            <person name="Stoutland P.O."/>
            <person name="Regala W.M."/>
            <person name="Georgescu A.M."/>
            <person name="Vergez L.M."/>
            <person name="Land M.L."/>
            <person name="Motin V.L."/>
            <person name="Brubaker R.R."/>
            <person name="Fowler J."/>
            <person name="Hinnebusch J."/>
            <person name="Marceau M."/>
            <person name="Medigue C."/>
            <person name="Simonet M."/>
            <person name="Chenal-Francisque V."/>
            <person name="Souza B."/>
            <person name="Dacheux D."/>
            <person name="Elliott J.M."/>
            <person name="Derbise A."/>
            <person name="Hauser L.J."/>
            <person name="Garcia E."/>
        </authorList>
    </citation>
    <scope>NUCLEOTIDE SEQUENCE [LARGE SCALE GENOMIC DNA]</scope>
    <source>
        <strain>IP32953</strain>
    </source>
</reference>
<keyword id="KW-0997">Cell inner membrane</keyword>
<keyword id="KW-1003">Cell membrane</keyword>
<keyword id="KW-0472">Membrane</keyword>
<keyword id="KW-0520">NAD</keyword>
<keyword id="KW-0874">Quinone</keyword>
<keyword id="KW-1278">Translocase</keyword>
<keyword id="KW-0812">Transmembrane</keyword>
<keyword id="KW-1133">Transmembrane helix</keyword>
<keyword id="KW-0813">Transport</keyword>
<keyword id="KW-0830">Ubiquinone</keyword>
<protein>
    <recommendedName>
        <fullName evidence="1">NADH-quinone oxidoreductase subunit N</fullName>
        <ecNumber evidence="1">7.1.1.-</ecNumber>
    </recommendedName>
    <alternativeName>
        <fullName evidence="1">NADH dehydrogenase I subunit N</fullName>
    </alternativeName>
    <alternativeName>
        <fullName evidence="1">NDH-1 subunit N</fullName>
    </alternativeName>
</protein>
<sequence>MTITPQQLIAMLPLLIVGLTVVVVMLSIAWRRDHFINATLTVIGLNLALLSLYFVGQVGPMDVTPLMRVDGYSMFYTGLVIIASLATSTFAYPWLVGYPDNREEFYLLVLIAALGGILLASANHLASLFLGIELLTLPLFGLIGYAYRQKRSLEASIKYMLLSAAASSFLLFGMALLYAESGSLSFVGLGQSLSDSMVHQPLILAGLGMMIVGLGFKLSLVPFQLWTPDVYQGAPAPVSTFLATASKIAIFAVVMRLFMYAPAADSEAVRLVLSIIAVASILFGNLMAISQTNIKRLLGYSSIAHLGYLLIALVAVQTHELALPLETIGVYLAGYLFSSLGAFGVVSLMSSPYKGPDAESLFSYRGLFWHKPILSAVMTVMMLSLAGIPMTLGFIGKFFVVAMGVSANLWWLTGAVVLGSAIGLYYYLRVTVSLFLSPPQSLVRDTPSNWALTAGGVVVLISAILVLVLGIYPQPLITLVQMAQPLM</sequence>
<organism>
    <name type="scientific">Yersinia pseudotuberculosis serotype I (strain IP32953)</name>
    <dbReference type="NCBI Taxonomy" id="273123"/>
    <lineage>
        <taxon>Bacteria</taxon>
        <taxon>Pseudomonadati</taxon>
        <taxon>Pseudomonadota</taxon>
        <taxon>Gammaproteobacteria</taxon>
        <taxon>Enterobacterales</taxon>
        <taxon>Yersiniaceae</taxon>
        <taxon>Yersinia</taxon>
    </lineage>
</organism>
<feature type="chain" id="PRO_0000249455" description="NADH-quinone oxidoreductase subunit N">
    <location>
        <begin position="1"/>
        <end position="487"/>
    </location>
</feature>
<feature type="transmembrane region" description="Helical" evidence="1">
    <location>
        <begin position="8"/>
        <end position="28"/>
    </location>
</feature>
<feature type="transmembrane region" description="Helical" evidence="1">
    <location>
        <begin position="35"/>
        <end position="55"/>
    </location>
</feature>
<feature type="transmembrane region" description="Helical" evidence="1">
    <location>
        <begin position="78"/>
        <end position="98"/>
    </location>
</feature>
<feature type="transmembrane region" description="Helical" evidence="1">
    <location>
        <begin position="104"/>
        <end position="124"/>
    </location>
</feature>
<feature type="transmembrane region" description="Helical" evidence="1">
    <location>
        <begin position="125"/>
        <end position="145"/>
    </location>
</feature>
<feature type="transmembrane region" description="Helical" evidence="1">
    <location>
        <begin position="159"/>
        <end position="179"/>
    </location>
</feature>
<feature type="transmembrane region" description="Helical" evidence="1">
    <location>
        <begin position="203"/>
        <end position="223"/>
    </location>
</feature>
<feature type="transmembrane region" description="Helical" evidence="1">
    <location>
        <begin position="235"/>
        <end position="255"/>
    </location>
</feature>
<feature type="transmembrane region" description="Helical" evidence="1">
    <location>
        <begin position="271"/>
        <end position="291"/>
    </location>
</feature>
<feature type="transmembrane region" description="Helical" evidence="1">
    <location>
        <begin position="297"/>
        <end position="317"/>
    </location>
</feature>
<feature type="transmembrane region" description="Helical" evidence="1">
    <location>
        <begin position="328"/>
        <end position="348"/>
    </location>
</feature>
<feature type="transmembrane region" description="Helical" evidence="1">
    <location>
        <begin position="376"/>
        <end position="396"/>
    </location>
</feature>
<feature type="transmembrane region" description="Helical" evidence="1">
    <location>
        <begin position="409"/>
        <end position="428"/>
    </location>
</feature>
<feature type="transmembrane region" description="Helical" evidence="1">
    <location>
        <begin position="451"/>
        <end position="471"/>
    </location>
</feature>
<name>NUON_YERPS</name>
<comment type="function">
    <text evidence="1">NDH-1 shuttles electrons from NADH, via FMN and iron-sulfur (Fe-S) centers, to quinones in the respiratory chain. The immediate electron acceptor for the enzyme in this species is believed to be ubiquinone. Couples the redox reaction to proton translocation (for every two electrons transferred, four hydrogen ions are translocated across the cytoplasmic membrane), and thus conserves the redox energy in a proton gradient.</text>
</comment>
<comment type="catalytic activity">
    <reaction evidence="1">
        <text>a quinone + NADH + 5 H(+)(in) = a quinol + NAD(+) + 4 H(+)(out)</text>
        <dbReference type="Rhea" id="RHEA:57888"/>
        <dbReference type="ChEBI" id="CHEBI:15378"/>
        <dbReference type="ChEBI" id="CHEBI:24646"/>
        <dbReference type="ChEBI" id="CHEBI:57540"/>
        <dbReference type="ChEBI" id="CHEBI:57945"/>
        <dbReference type="ChEBI" id="CHEBI:132124"/>
    </reaction>
</comment>
<comment type="subunit">
    <text evidence="1">NDH-1 is composed of 13 different subunits. Subunits NuoA, H, J, K, L, M, N constitute the membrane sector of the complex.</text>
</comment>
<comment type="subcellular location">
    <subcellularLocation>
        <location evidence="1">Cell inner membrane</location>
        <topology evidence="1">Multi-pass membrane protein</topology>
    </subcellularLocation>
</comment>
<comment type="similarity">
    <text evidence="1">Belongs to the complex I subunit 2 family.</text>
</comment>
<gene>
    <name evidence="1" type="primary">nuoN</name>
    <name type="ordered locus">YPTB2575</name>
</gene>